<protein>
    <recommendedName>
        <fullName evidence="1">Probable phosphoglycerate mutase GpmB</fullName>
        <ecNumber evidence="1">5.4.2.-</ecNumber>
    </recommendedName>
    <alternativeName>
        <fullName evidence="1">PGAM</fullName>
    </alternativeName>
    <alternativeName>
        <fullName evidence="1">Phosphoglyceromutase</fullName>
    </alternativeName>
</protein>
<name>GPMB_ECOL6</name>
<comment type="catalytic activity">
    <reaction evidence="1">
        <text>(2R)-2-phosphoglycerate = (2R)-3-phosphoglycerate</text>
        <dbReference type="Rhea" id="RHEA:15901"/>
        <dbReference type="ChEBI" id="CHEBI:58272"/>
        <dbReference type="ChEBI" id="CHEBI:58289"/>
    </reaction>
</comment>
<comment type="pathway">
    <text evidence="1">Carbohydrate degradation; glycolysis; pyruvate from D-glyceraldehyde 3-phosphate: step 3/5.</text>
</comment>
<comment type="similarity">
    <text evidence="1">Belongs to the phosphoglycerate mutase family. GpmB subfamily.</text>
</comment>
<reference key="1">
    <citation type="journal article" date="2002" name="Proc. Natl. Acad. Sci. U.S.A.">
        <title>Extensive mosaic structure revealed by the complete genome sequence of uropathogenic Escherichia coli.</title>
        <authorList>
            <person name="Welch R.A."/>
            <person name="Burland V."/>
            <person name="Plunkett G. III"/>
            <person name="Redford P."/>
            <person name="Roesch P."/>
            <person name="Rasko D."/>
            <person name="Buckles E.L."/>
            <person name="Liou S.-R."/>
            <person name="Boutin A."/>
            <person name="Hackett J."/>
            <person name="Stroud D."/>
            <person name="Mayhew G.F."/>
            <person name="Rose D.J."/>
            <person name="Zhou S."/>
            <person name="Schwartz D.C."/>
            <person name="Perna N.T."/>
            <person name="Mobley H.L.T."/>
            <person name="Donnenberg M.S."/>
            <person name="Blattner F.R."/>
        </authorList>
    </citation>
    <scope>NUCLEOTIDE SEQUENCE [LARGE SCALE GENOMIC DNA]</scope>
    <source>
        <strain>CFT073 / ATCC 700928 / UPEC</strain>
    </source>
</reference>
<dbReference type="EC" id="5.4.2.-" evidence="1"/>
<dbReference type="EMBL" id="AE014075">
    <property type="protein sequence ID" value="AAN83902.1"/>
    <property type="molecule type" value="Genomic_DNA"/>
</dbReference>
<dbReference type="RefSeq" id="WP_000942350.1">
    <property type="nucleotide sequence ID" value="NZ_CP051263.1"/>
</dbReference>
<dbReference type="SMR" id="Q8FA40"/>
<dbReference type="STRING" id="199310.c5482"/>
<dbReference type="KEGG" id="ecc:c5482"/>
<dbReference type="eggNOG" id="COG0406">
    <property type="taxonomic scope" value="Bacteria"/>
</dbReference>
<dbReference type="HOGENOM" id="CLU_033323_9_5_6"/>
<dbReference type="BioCyc" id="ECOL199310:C5482-MONOMER"/>
<dbReference type="UniPathway" id="UPA00109">
    <property type="reaction ID" value="UER00186"/>
</dbReference>
<dbReference type="Proteomes" id="UP000001410">
    <property type="component" value="Chromosome"/>
</dbReference>
<dbReference type="GO" id="GO:0005737">
    <property type="term" value="C:cytoplasm"/>
    <property type="evidence" value="ECO:0007669"/>
    <property type="project" value="TreeGrafter"/>
</dbReference>
<dbReference type="GO" id="GO:0016791">
    <property type="term" value="F:phosphatase activity"/>
    <property type="evidence" value="ECO:0007669"/>
    <property type="project" value="TreeGrafter"/>
</dbReference>
<dbReference type="GO" id="GO:0004619">
    <property type="term" value="F:phosphoglycerate mutase activity"/>
    <property type="evidence" value="ECO:0007669"/>
    <property type="project" value="UniProtKB-UniRule"/>
</dbReference>
<dbReference type="GO" id="GO:0006096">
    <property type="term" value="P:glycolytic process"/>
    <property type="evidence" value="ECO:0007669"/>
    <property type="project" value="UniProtKB-UniRule"/>
</dbReference>
<dbReference type="CDD" id="cd07067">
    <property type="entry name" value="HP_PGM_like"/>
    <property type="match status" value="1"/>
</dbReference>
<dbReference type="Gene3D" id="3.40.50.1240">
    <property type="entry name" value="Phosphoglycerate mutase-like"/>
    <property type="match status" value="1"/>
</dbReference>
<dbReference type="HAMAP" id="MF_01040">
    <property type="entry name" value="PGAM_GpmB"/>
    <property type="match status" value="1"/>
</dbReference>
<dbReference type="InterPro" id="IPR013078">
    <property type="entry name" value="His_Pase_superF_clade-1"/>
</dbReference>
<dbReference type="InterPro" id="IPR029033">
    <property type="entry name" value="His_PPase_superfam"/>
</dbReference>
<dbReference type="InterPro" id="IPR001345">
    <property type="entry name" value="PG/BPGM_mutase_AS"/>
</dbReference>
<dbReference type="InterPro" id="IPR050275">
    <property type="entry name" value="PGM_Phosphatase"/>
</dbReference>
<dbReference type="InterPro" id="IPR023086">
    <property type="entry name" value="Phosphoglycerate_mutase_GpmB"/>
</dbReference>
<dbReference type="NCBIfam" id="NF002901">
    <property type="entry name" value="PRK03482.1"/>
    <property type="match status" value="1"/>
</dbReference>
<dbReference type="PANTHER" id="PTHR48100">
    <property type="entry name" value="BROAD-SPECIFICITY PHOSPHATASE YOR283W-RELATED"/>
    <property type="match status" value="1"/>
</dbReference>
<dbReference type="PANTHER" id="PTHR48100:SF1">
    <property type="entry name" value="HISTIDINE PHOSPHATASE FAMILY PROTEIN-RELATED"/>
    <property type="match status" value="1"/>
</dbReference>
<dbReference type="Pfam" id="PF00300">
    <property type="entry name" value="His_Phos_1"/>
    <property type="match status" value="1"/>
</dbReference>
<dbReference type="SMART" id="SM00855">
    <property type="entry name" value="PGAM"/>
    <property type="match status" value="1"/>
</dbReference>
<dbReference type="SUPFAM" id="SSF53254">
    <property type="entry name" value="Phosphoglycerate mutase-like"/>
    <property type="match status" value="1"/>
</dbReference>
<dbReference type="PROSITE" id="PS00175">
    <property type="entry name" value="PG_MUTASE"/>
    <property type="match status" value="1"/>
</dbReference>
<organism>
    <name type="scientific">Escherichia coli O6:H1 (strain CFT073 / ATCC 700928 / UPEC)</name>
    <dbReference type="NCBI Taxonomy" id="199310"/>
    <lineage>
        <taxon>Bacteria</taxon>
        <taxon>Pseudomonadati</taxon>
        <taxon>Pseudomonadota</taxon>
        <taxon>Gammaproteobacteria</taxon>
        <taxon>Enterobacterales</taxon>
        <taxon>Enterobacteriaceae</taxon>
        <taxon>Escherichia</taxon>
    </lineage>
</organism>
<proteinExistence type="inferred from homology"/>
<sequence length="215" mass="24015">MLQVYLVRHGETQWNAERRIQGQSDSPLTAKGEQQAMQVATRAKELGITHIISSDLGRTRRTAEIIAQACGCDIIFDSRLRELNMGVLETRNIDSLTEEEENWRRQLVNGTVDGRIPEGESMQELSDRVNAALESCRDLPQGSRPLLVSHGIALGCLVSTILGLPAWAERRLRLRNCSISRVDYQESLWLASGWVVETAGDISHLDAPALDELQR</sequence>
<feature type="chain" id="PRO_0000179948" description="Probable phosphoglycerate mutase GpmB">
    <location>
        <begin position="1"/>
        <end position="215"/>
    </location>
</feature>
<feature type="active site" description="Tele-phosphohistidine intermediate" evidence="1">
    <location>
        <position position="9"/>
    </location>
</feature>
<feature type="active site" description="Proton donor/acceptor" evidence="1">
    <location>
        <position position="82"/>
    </location>
</feature>
<feature type="binding site" evidence="1">
    <location>
        <begin position="8"/>
        <end position="15"/>
    </location>
    <ligand>
        <name>substrate</name>
    </ligand>
</feature>
<feature type="binding site" evidence="1">
    <location>
        <begin position="21"/>
        <end position="22"/>
    </location>
    <ligand>
        <name>substrate</name>
    </ligand>
</feature>
<feature type="binding site" evidence="1">
    <location>
        <position position="58"/>
    </location>
    <ligand>
        <name>substrate</name>
    </ligand>
</feature>
<feature type="binding site" evidence="1">
    <location>
        <position position="60"/>
    </location>
    <ligand>
        <name>substrate</name>
    </ligand>
</feature>
<feature type="binding site" evidence="1">
    <location>
        <begin position="82"/>
        <end position="85"/>
    </location>
    <ligand>
        <name>substrate</name>
    </ligand>
</feature>
<feature type="binding site" evidence="1">
    <location>
        <begin position="104"/>
        <end position="105"/>
    </location>
    <ligand>
        <name>substrate</name>
    </ligand>
</feature>
<feature type="binding site" evidence="1">
    <location>
        <begin position="151"/>
        <end position="152"/>
    </location>
    <ligand>
        <name>substrate</name>
    </ligand>
</feature>
<feature type="site" description="Transition state stabilizer" evidence="1">
    <location>
        <position position="150"/>
    </location>
</feature>
<keyword id="KW-0324">Glycolysis</keyword>
<keyword id="KW-0413">Isomerase</keyword>
<keyword id="KW-1185">Reference proteome</keyword>
<evidence type="ECO:0000255" key="1">
    <source>
        <dbReference type="HAMAP-Rule" id="MF_01040"/>
    </source>
</evidence>
<gene>
    <name evidence="1" type="primary">gpmB</name>
    <name type="ordered locus">c5482</name>
</gene>
<accession>Q8FA40</accession>